<comment type="function">
    <text>GRF is released by the hypothalamus and acts on the adenohypophyse to stimulate the secretion of growth hormone.</text>
</comment>
<comment type="subcellular location">
    <subcellularLocation>
        <location>Secreted</location>
    </subcellularLocation>
</comment>
<comment type="similarity">
    <text evidence="3">Belongs to the glucagon family.</text>
</comment>
<name>SLIB_BOVIN</name>
<feature type="signal peptide" evidence="1">
    <location>
        <begin position="1"/>
        <end position="19"/>
    </location>
</feature>
<feature type="propeptide" id="PRO_0000011435" evidence="2">
    <location>
        <begin position="20"/>
        <end position="30"/>
    </location>
</feature>
<feature type="peptide" id="PRO_0000011436" description="Somatoliberin">
    <location>
        <begin position="31"/>
        <end position="74"/>
    </location>
</feature>
<feature type="propeptide" id="PRO_0000011437">
    <location>
        <begin position="77"/>
        <end position="106"/>
    </location>
</feature>
<feature type="modified residue" description="Leucine amide" evidence="2">
    <location>
        <position position="74"/>
    </location>
</feature>
<keyword id="KW-0027">Amidation</keyword>
<keyword id="KW-0903">Direct protein sequencing</keyword>
<keyword id="KW-1185">Reference proteome</keyword>
<keyword id="KW-0964">Secreted</keyword>
<keyword id="KW-0732">Signal</keyword>
<gene>
    <name type="primary">GHRH</name>
</gene>
<sequence>MLLWVFFLVTLTLSSGSHGSLPSQPLRIPRYADAIFTNSYRKVLGQLSARKLLQDIMNRQQGERNQEQGAKVRLGRQVDGVWTDQQQMALESTLVSLLQERRNSQG</sequence>
<accession>P63292</accession>
<accession>P01288</accession>
<accession>Q9MZD4</accession>
<proteinExistence type="evidence at protein level"/>
<protein>
    <recommendedName>
        <fullName>Somatoliberin</fullName>
    </recommendedName>
    <alternativeName>
        <fullName>Growth hormone-releasing factor</fullName>
        <shortName>GRF</shortName>
    </alternativeName>
    <alternativeName>
        <fullName>Growth hormone-releasing hormone</fullName>
        <shortName>GHRH</shortName>
    </alternativeName>
</protein>
<evidence type="ECO:0000255" key="1"/>
<evidence type="ECO:0000269" key="2">
    <source>
    </source>
</evidence>
<evidence type="ECO:0000305" key="3"/>
<dbReference type="EMBL" id="AF242855">
    <property type="protein sequence ID" value="AAF89171.1"/>
    <property type="molecule type" value="Genomic_DNA"/>
</dbReference>
<dbReference type="PIR" id="A01554">
    <property type="entry name" value="RHBOS"/>
</dbReference>
<dbReference type="RefSeq" id="NP_847895.1">
    <property type="nucleotide sequence ID" value="NM_178325.1"/>
</dbReference>
<dbReference type="BMRB" id="P63292"/>
<dbReference type="SMR" id="P63292"/>
<dbReference type="FunCoup" id="P63292">
    <property type="interactions" value="128"/>
</dbReference>
<dbReference type="STRING" id="9913.ENSBTAP00000016891"/>
<dbReference type="PaxDb" id="9913-ENSBTAP00000016891"/>
<dbReference type="GeneID" id="281191"/>
<dbReference type="KEGG" id="bta:281191"/>
<dbReference type="CTD" id="2691"/>
<dbReference type="VEuPathDB" id="HostDB:ENSBTAG00000012710"/>
<dbReference type="eggNOG" id="ENOG502S2N6">
    <property type="taxonomic scope" value="Eukaryota"/>
</dbReference>
<dbReference type="HOGENOM" id="CLU_174932_0_0_1"/>
<dbReference type="InParanoid" id="P63292"/>
<dbReference type="OMA" id="DSVWTDQ"/>
<dbReference type="OrthoDB" id="9931004at2759"/>
<dbReference type="TreeFam" id="TF353187"/>
<dbReference type="Reactome" id="R-BTA-418555">
    <property type="pathway name" value="G alpha (s) signalling events"/>
</dbReference>
<dbReference type="Reactome" id="R-BTA-420092">
    <property type="pathway name" value="Glucagon-type ligand receptors"/>
</dbReference>
<dbReference type="Proteomes" id="UP000009136">
    <property type="component" value="Chromosome 13"/>
</dbReference>
<dbReference type="Bgee" id="ENSBTAG00000012710">
    <property type="expression patterns" value="Expressed in anterior segment of eyeball and 20 other cell types or tissues"/>
</dbReference>
<dbReference type="GO" id="GO:0005615">
    <property type="term" value="C:extracellular space"/>
    <property type="evidence" value="ECO:0000318"/>
    <property type="project" value="GO_Central"/>
</dbReference>
<dbReference type="GO" id="GO:0043204">
    <property type="term" value="C:perikaryon"/>
    <property type="evidence" value="ECO:0000318"/>
    <property type="project" value="GO_Central"/>
</dbReference>
<dbReference type="GO" id="GO:0043195">
    <property type="term" value="C:terminal bouton"/>
    <property type="evidence" value="ECO:0000318"/>
    <property type="project" value="GO_Central"/>
</dbReference>
<dbReference type="GO" id="GO:0016608">
    <property type="term" value="F:growth hormone-releasing hormone activity"/>
    <property type="evidence" value="ECO:0000315"/>
    <property type="project" value="CAFA"/>
</dbReference>
<dbReference type="GO" id="GO:0031770">
    <property type="term" value="F:growth hormone-releasing hormone receptor binding"/>
    <property type="evidence" value="ECO:0000318"/>
    <property type="project" value="GO_Central"/>
</dbReference>
<dbReference type="GO" id="GO:0005184">
    <property type="term" value="F:neuropeptide hormone activity"/>
    <property type="evidence" value="ECO:0000318"/>
    <property type="project" value="GO_Central"/>
</dbReference>
<dbReference type="GO" id="GO:0051428">
    <property type="term" value="F:peptide hormone receptor binding"/>
    <property type="evidence" value="ECO:0000318"/>
    <property type="project" value="GO_Central"/>
</dbReference>
<dbReference type="GO" id="GO:0007189">
    <property type="term" value="P:adenylate cyclase-activating G protein-coupled receptor signaling pathway"/>
    <property type="evidence" value="ECO:0000318"/>
    <property type="project" value="GO_Central"/>
</dbReference>
<dbReference type="GO" id="GO:0071277">
    <property type="term" value="P:cellular response to calcium ion"/>
    <property type="evidence" value="ECO:0000315"/>
    <property type="project" value="CAFA"/>
</dbReference>
<dbReference type="GO" id="GO:0030252">
    <property type="term" value="P:growth hormone secretion"/>
    <property type="evidence" value="ECO:0000318"/>
    <property type="project" value="GO_Central"/>
</dbReference>
<dbReference type="GO" id="GO:0045745">
    <property type="term" value="P:positive regulation of G protein-coupled receptor signaling pathway"/>
    <property type="evidence" value="ECO:0000315"/>
    <property type="project" value="UniProtKB"/>
</dbReference>
<dbReference type="GO" id="GO:0060124">
    <property type="term" value="P:positive regulation of growth hormone secretion"/>
    <property type="evidence" value="ECO:0000315"/>
    <property type="project" value="AgBase"/>
</dbReference>
<dbReference type="GO" id="GO:0032024">
    <property type="term" value="P:positive regulation of insulin secretion"/>
    <property type="evidence" value="ECO:0000315"/>
    <property type="project" value="AgBase"/>
</dbReference>
<dbReference type="GO" id="GO:1903489">
    <property type="term" value="P:positive regulation of lactation"/>
    <property type="evidence" value="ECO:0000315"/>
    <property type="project" value="AgBase"/>
</dbReference>
<dbReference type="GO" id="GO:0032880">
    <property type="term" value="P:regulation of protein localization"/>
    <property type="evidence" value="ECO:0000318"/>
    <property type="project" value="GO_Central"/>
</dbReference>
<dbReference type="InterPro" id="IPR000532">
    <property type="entry name" value="Glucagon_GIP_secretin_VIP"/>
</dbReference>
<dbReference type="InterPro" id="IPR046963">
    <property type="entry name" value="VIP/GHRH-like"/>
</dbReference>
<dbReference type="PANTHER" id="PTHR11213">
    <property type="entry name" value="GLUCAGON-FAMILY NEUROPEPTIDE"/>
    <property type="match status" value="1"/>
</dbReference>
<dbReference type="PANTHER" id="PTHR11213:SF6">
    <property type="entry name" value="SOMATOLIBERIN"/>
    <property type="match status" value="1"/>
</dbReference>
<dbReference type="Pfam" id="PF00123">
    <property type="entry name" value="Hormone_2"/>
    <property type="match status" value="1"/>
</dbReference>
<dbReference type="SMART" id="SM00070">
    <property type="entry name" value="GLUCA"/>
    <property type="match status" value="1"/>
</dbReference>
<dbReference type="PROSITE" id="PS00260">
    <property type="entry name" value="GLUCAGON"/>
    <property type="match status" value="1"/>
</dbReference>
<reference key="1">
    <citation type="submission" date="2000-03" db="EMBL/GenBank/DDBJ databases">
        <authorList>
            <person name="Zhou P."/>
            <person name="Kazmer G.W."/>
            <person name="Yang X."/>
        </authorList>
    </citation>
    <scope>NUCLEOTIDE SEQUENCE [GENOMIC DNA]</scope>
</reference>
<reference key="2">
    <citation type="journal article" date="1983" name="Biochem. Biophys. Res. Commun.">
        <title>Isolation and characterization of the bovine hypothalamic growth hormone releasing factor.</title>
        <authorList>
            <person name="Esch F."/>
            <person name="Boehlen P."/>
            <person name="Ling N."/>
            <person name="Brazeau P."/>
            <person name="Guillemin R."/>
        </authorList>
    </citation>
    <scope>PROTEIN SEQUENCE OF 31-74</scope>
    <scope>AMIDATION AT LEU-74</scope>
</reference>
<organism>
    <name type="scientific">Bos taurus</name>
    <name type="common">Bovine</name>
    <dbReference type="NCBI Taxonomy" id="9913"/>
    <lineage>
        <taxon>Eukaryota</taxon>
        <taxon>Metazoa</taxon>
        <taxon>Chordata</taxon>
        <taxon>Craniata</taxon>
        <taxon>Vertebrata</taxon>
        <taxon>Euteleostomi</taxon>
        <taxon>Mammalia</taxon>
        <taxon>Eutheria</taxon>
        <taxon>Laurasiatheria</taxon>
        <taxon>Artiodactyla</taxon>
        <taxon>Ruminantia</taxon>
        <taxon>Pecora</taxon>
        <taxon>Bovidae</taxon>
        <taxon>Bovinae</taxon>
        <taxon>Bos</taxon>
    </lineage>
</organism>